<reference key="1">
    <citation type="journal article" date="2006" name="Proc. Natl. Acad. Sci. U.S.A.">
        <title>Molecular genetic anatomy of inter- and intraserotype variation in the human bacterial pathogen group A Streptococcus.</title>
        <authorList>
            <person name="Beres S.B."/>
            <person name="Richter E.W."/>
            <person name="Nagiec M.J."/>
            <person name="Sumby P."/>
            <person name="Porcella S.F."/>
            <person name="DeLeo F.R."/>
            <person name="Musser J.M."/>
        </authorList>
    </citation>
    <scope>NUCLEOTIDE SEQUENCE [LARGE SCALE GENOMIC DNA]</scope>
    <source>
        <strain>MGAS2096</strain>
    </source>
</reference>
<feature type="chain" id="PRO_1000059680" description="Chaperone protein DnaK">
    <location>
        <begin position="1"/>
        <end position="608"/>
    </location>
</feature>
<feature type="region of interest" description="Disordered" evidence="2">
    <location>
        <begin position="576"/>
        <end position="608"/>
    </location>
</feature>
<feature type="compositionally biased region" description="Low complexity" evidence="2">
    <location>
        <begin position="576"/>
        <end position="598"/>
    </location>
</feature>
<feature type="compositionally biased region" description="Acidic residues" evidence="2">
    <location>
        <begin position="599"/>
        <end position="608"/>
    </location>
</feature>
<feature type="modified residue" description="Phosphothreonine; by autocatalysis" evidence="1">
    <location>
        <position position="173"/>
    </location>
</feature>
<gene>
    <name evidence="1" type="primary">dnaK</name>
    <name type="ordered locus">MGAS2096_Spy1526</name>
</gene>
<name>DNAK_STRPB</name>
<organism>
    <name type="scientific">Streptococcus pyogenes serotype M12 (strain MGAS2096)</name>
    <dbReference type="NCBI Taxonomy" id="370553"/>
    <lineage>
        <taxon>Bacteria</taxon>
        <taxon>Bacillati</taxon>
        <taxon>Bacillota</taxon>
        <taxon>Bacilli</taxon>
        <taxon>Lactobacillales</taxon>
        <taxon>Streptococcaceae</taxon>
        <taxon>Streptococcus</taxon>
    </lineage>
</organism>
<keyword id="KW-0067">ATP-binding</keyword>
<keyword id="KW-0143">Chaperone</keyword>
<keyword id="KW-0547">Nucleotide-binding</keyword>
<keyword id="KW-0597">Phosphoprotein</keyword>
<keyword id="KW-0346">Stress response</keyword>
<protein>
    <recommendedName>
        <fullName evidence="1">Chaperone protein DnaK</fullName>
    </recommendedName>
    <alternativeName>
        <fullName evidence="1">HSP70</fullName>
    </alternativeName>
    <alternativeName>
        <fullName evidence="1">Heat shock 70 kDa protein</fullName>
    </alternativeName>
    <alternativeName>
        <fullName evidence="1">Heat shock protein 70</fullName>
    </alternativeName>
</protein>
<sequence length="608" mass="65005">MSKIIGIDLGTTNSAVAVLEGTESKIIANPEGNRTTPSVVSFKNGEIIVGDAAKRQAVTNPDTVISIKSKMGTSEKVSANGKEYTPQEISAMILQYLKGYAEDYLGEKVEKAVITVPAYFNDAQRQATKDAGKIAGLEVERIVNEPTAAALAYGMDKTDKDEKILVFDLGGGTFDVSILELGDGVFDVLATAGDNKLGGDDFDQKIIDFLVAEFKKENGIDLSQDKMALQRLKDAAEKAKKDLSGVTQTQISLPFITAGSAGPLHLEMSLSRAKFDDLTRDLVERTKTPVRQALSDARLSLSEIDEVILVGGSTRIPAVVEAVKAETGKEPNKSVNPDEVVAMGAAIQGGVITGDVKDVVLLDVTPLSLGIETMGGVFTKLIDRNTTIPTSKSQVFSTAADNQPAVDIHVLQGERPMAADNKTLGRFQLTDIPAAPRGIPQIEVTFDIDKNGIVSVKAKDLGTQKEQHIVIKSNDGLSEEEIDRMMKDAEANAEADAKRKEEVDLKNEVDQAIFATEKTIKETEGKGFDTERDAAQSALDELKAAQESGNLDDMKAKLEALNEKAQALAVKMYEQAAAAQQAAQGAEGAQANDSANNDDVVDGEFTEK</sequence>
<dbReference type="EMBL" id="CP000261">
    <property type="protein sequence ID" value="ABF36578.1"/>
    <property type="molecule type" value="Genomic_DNA"/>
</dbReference>
<dbReference type="SMR" id="Q1JA83"/>
<dbReference type="KEGG" id="spj:MGAS2096_Spy1526"/>
<dbReference type="HOGENOM" id="CLU_005965_2_4_9"/>
<dbReference type="GO" id="GO:0005524">
    <property type="term" value="F:ATP binding"/>
    <property type="evidence" value="ECO:0007669"/>
    <property type="project" value="UniProtKB-UniRule"/>
</dbReference>
<dbReference type="GO" id="GO:0140662">
    <property type="term" value="F:ATP-dependent protein folding chaperone"/>
    <property type="evidence" value="ECO:0007669"/>
    <property type="project" value="InterPro"/>
</dbReference>
<dbReference type="GO" id="GO:0051082">
    <property type="term" value="F:unfolded protein binding"/>
    <property type="evidence" value="ECO:0007669"/>
    <property type="project" value="InterPro"/>
</dbReference>
<dbReference type="CDD" id="cd10234">
    <property type="entry name" value="ASKHA_NBD_HSP70_DnaK-like"/>
    <property type="match status" value="1"/>
</dbReference>
<dbReference type="FunFam" id="2.60.34.10:FF:000014">
    <property type="entry name" value="Chaperone protein DnaK HSP70"/>
    <property type="match status" value="1"/>
</dbReference>
<dbReference type="FunFam" id="3.30.420.40:FF:000071">
    <property type="entry name" value="Molecular chaperone DnaK"/>
    <property type="match status" value="1"/>
</dbReference>
<dbReference type="FunFam" id="3.90.640.10:FF:000003">
    <property type="entry name" value="Molecular chaperone DnaK"/>
    <property type="match status" value="1"/>
</dbReference>
<dbReference type="Gene3D" id="1.20.1270.10">
    <property type="match status" value="1"/>
</dbReference>
<dbReference type="Gene3D" id="3.30.420.40">
    <property type="match status" value="2"/>
</dbReference>
<dbReference type="Gene3D" id="3.90.640.10">
    <property type="entry name" value="Actin, Chain A, domain 4"/>
    <property type="match status" value="1"/>
</dbReference>
<dbReference type="Gene3D" id="2.60.34.10">
    <property type="entry name" value="Substrate Binding Domain Of DNAk, Chain A, domain 1"/>
    <property type="match status" value="1"/>
</dbReference>
<dbReference type="HAMAP" id="MF_00332">
    <property type="entry name" value="DnaK"/>
    <property type="match status" value="1"/>
</dbReference>
<dbReference type="InterPro" id="IPR043129">
    <property type="entry name" value="ATPase_NBD"/>
</dbReference>
<dbReference type="InterPro" id="IPR012725">
    <property type="entry name" value="Chaperone_DnaK"/>
</dbReference>
<dbReference type="InterPro" id="IPR018181">
    <property type="entry name" value="Heat_shock_70_CS"/>
</dbReference>
<dbReference type="InterPro" id="IPR029048">
    <property type="entry name" value="HSP70_C_sf"/>
</dbReference>
<dbReference type="InterPro" id="IPR029047">
    <property type="entry name" value="HSP70_peptide-bd_sf"/>
</dbReference>
<dbReference type="InterPro" id="IPR013126">
    <property type="entry name" value="Hsp_70_fam"/>
</dbReference>
<dbReference type="NCBIfam" id="NF001413">
    <property type="entry name" value="PRK00290.1"/>
    <property type="match status" value="1"/>
</dbReference>
<dbReference type="NCBIfam" id="TIGR02350">
    <property type="entry name" value="prok_dnaK"/>
    <property type="match status" value="1"/>
</dbReference>
<dbReference type="PANTHER" id="PTHR19375">
    <property type="entry name" value="HEAT SHOCK PROTEIN 70KDA"/>
    <property type="match status" value="1"/>
</dbReference>
<dbReference type="Pfam" id="PF00012">
    <property type="entry name" value="HSP70"/>
    <property type="match status" value="1"/>
</dbReference>
<dbReference type="PRINTS" id="PR00301">
    <property type="entry name" value="HEATSHOCK70"/>
</dbReference>
<dbReference type="SUPFAM" id="SSF53067">
    <property type="entry name" value="Actin-like ATPase domain"/>
    <property type="match status" value="2"/>
</dbReference>
<dbReference type="SUPFAM" id="SSF100934">
    <property type="entry name" value="Heat shock protein 70kD (HSP70), C-terminal subdomain"/>
    <property type="match status" value="1"/>
</dbReference>
<dbReference type="SUPFAM" id="SSF100920">
    <property type="entry name" value="Heat shock protein 70kD (HSP70), peptide-binding domain"/>
    <property type="match status" value="1"/>
</dbReference>
<dbReference type="PROSITE" id="PS00297">
    <property type="entry name" value="HSP70_1"/>
    <property type="match status" value="1"/>
</dbReference>
<dbReference type="PROSITE" id="PS00329">
    <property type="entry name" value="HSP70_2"/>
    <property type="match status" value="1"/>
</dbReference>
<dbReference type="PROSITE" id="PS01036">
    <property type="entry name" value="HSP70_3"/>
    <property type="match status" value="1"/>
</dbReference>
<accession>Q1JA83</accession>
<comment type="function">
    <text evidence="1">Acts as a chaperone.</text>
</comment>
<comment type="induction">
    <text evidence="1">By stress conditions e.g. heat shock.</text>
</comment>
<comment type="similarity">
    <text evidence="1">Belongs to the heat shock protein 70 family.</text>
</comment>
<proteinExistence type="inferred from homology"/>
<evidence type="ECO:0000255" key="1">
    <source>
        <dbReference type="HAMAP-Rule" id="MF_00332"/>
    </source>
</evidence>
<evidence type="ECO:0000256" key="2">
    <source>
        <dbReference type="SAM" id="MobiDB-lite"/>
    </source>
</evidence>